<reference key="1">
    <citation type="journal article" date="1996" name="Yeast">
        <title>Sequencing and analysis of a 35.4 kb region on the right arm of chromosome IV from Saccharomyces cerevisiae reveal 23 open reading frames.</title>
        <authorList>
            <person name="Eide L.G."/>
            <person name="Sander C."/>
            <person name="Prydz H."/>
        </authorList>
    </citation>
    <scope>NUCLEOTIDE SEQUENCE [GENOMIC DNA]</scope>
</reference>
<reference key="2">
    <citation type="journal article" date="1997" name="Yeast">
        <authorList>
            <person name="Eide L.G."/>
            <person name="Sander C."/>
            <person name="Prydz H."/>
        </authorList>
    </citation>
    <scope>ERRATUM OF PUBMED:8896275</scope>
</reference>
<reference key="3">
    <citation type="journal article" date="1997" name="Nature">
        <title>The nucleotide sequence of Saccharomyces cerevisiae chromosome IV.</title>
        <authorList>
            <person name="Jacq C."/>
            <person name="Alt-Moerbe J."/>
            <person name="Andre B."/>
            <person name="Arnold W."/>
            <person name="Bahr A."/>
            <person name="Ballesta J.P.G."/>
            <person name="Bargues M."/>
            <person name="Baron L."/>
            <person name="Becker A."/>
            <person name="Biteau N."/>
            <person name="Bloecker H."/>
            <person name="Blugeon C."/>
            <person name="Boskovic J."/>
            <person name="Brandt P."/>
            <person name="Brueckner M."/>
            <person name="Buitrago M.J."/>
            <person name="Coster F."/>
            <person name="Delaveau T."/>
            <person name="del Rey F."/>
            <person name="Dujon B."/>
            <person name="Eide L.G."/>
            <person name="Garcia-Cantalejo J.M."/>
            <person name="Goffeau A."/>
            <person name="Gomez-Peris A."/>
            <person name="Granotier C."/>
            <person name="Hanemann V."/>
            <person name="Hankeln T."/>
            <person name="Hoheisel J.D."/>
            <person name="Jaeger W."/>
            <person name="Jimenez A."/>
            <person name="Jonniaux J.-L."/>
            <person name="Kraemer C."/>
            <person name="Kuester H."/>
            <person name="Laamanen P."/>
            <person name="Legros Y."/>
            <person name="Louis E.J."/>
            <person name="Moeller-Rieker S."/>
            <person name="Monnet A."/>
            <person name="Moro M."/>
            <person name="Mueller-Auer S."/>
            <person name="Nussbaumer B."/>
            <person name="Paricio N."/>
            <person name="Paulin L."/>
            <person name="Perea J."/>
            <person name="Perez-Alonso M."/>
            <person name="Perez-Ortin J.E."/>
            <person name="Pohl T.M."/>
            <person name="Prydz H."/>
            <person name="Purnelle B."/>
            <person name="Rasmussen S.W."/>
            <person name="Remacha M.A."/>
            <person name="Revuelta J.L."/>
            <person name="Rieger M."/>
            <person name="Salom D."/>
            <person name="Saluz H.P."/>
            <person name="Saiz J.E."/>
            <person name="Saren A.-M."/>
            <person name="Schaefer M."/>
            <person name="Scharfe M."/>
            <person name="Schmidt E.R."/>
            <person name="Schneider C."/>
            <person name="Scholler P."/>
            <person name="Schwarz S."/>
            <person name="Soler-Mira A."/>
            <person name="Urrestarazu L.A."/>
            <person name="Verhasselt P."/>
            <person name="Vissers S."/>
            <person name="Voet M."/>
            <person name="Volckaert G."/>
            <person name="Wagner G."/>
            <person name="Wambutt R."/>
            <person name="Wedler E."/>
            <person name="Wedler H."/>
            <person name="Woelfl S."/>
            <person name="Harris D.E."/>
            <person name="Bowman S."/>
            <person name="Brown D."/>
            <person name="Churcher C.M."/>
            <person name="Connor R."/>
            <person name="Dedman K."/>
            <person name="Gentles S."/>
            <person name="Hamlin N."/>
            <person name="Hunt S."/>
            <person name="Jones L."/>
            <person name="McDonald S."/>
            <person name="Murphy L.D."/>
            <person name="Niblett D."/>
            <person name="Odell C."/>
            <person name="Oliver K."/>
            <person name="Rajandream M.A."/>
            <person name="Richards C."/>
            <person name="Shore L."/>
            <person name="Walsh S.V."/>
            <person name="Barrell B.G."/>
            <person name="Dietrich F.S."/>
            <person name="Mulligan J.T."/>
            <person name="Allen E."/>
            <person name="Araujo R."/>
            <person name="Aviles E."/>
            <person name="Berno A."/>
            <person name="Carpenter J."/>
            <person name="Chen E."/>
            <person name="Cherry J.M."/>
            <person name="Chung E."/>
            <person name="Duncan M."/>
            <person name="Hunicke-Smith S."/>
            <person name="Hyman R.W."/>
            <person name="Komp C."/>
            <person name="Lashkari D."/>
            <person name="Lew H."/>
            <person name="Lin D."/>
            <person name="Mosedale D."/>
            <person name="Nakahara K."/>
            <person name="Namath A."/>
            <person name="Oefner P."/>
            <person name="Oh C."/>
            <person name="Petel F.X."/>
            <person name="Roberts D."/>
            <person name="Schramm S."/>
            <person name="Schroeder M."/>
            <person name="Shogren T."/>
            <person name="Shroff N."/>
            <person name="Winant A."/>
            <person name="Yelton M.A."/>
            <person name="Botstein D."/>
            <person name="Davis R.W."/>
            <person name="Johnston M."/>
            <person name="Andrews S."/>
            <person name="Brinkman R."/>
            <person name="Cooper J."/>
            <person name="Ding H."/>
            <person name="Du Z."/>
            <person name="Favello A."/>
            <person name="Fulton L."/>
            <person name="Gattung S."/>
            <person name="Greco T."/>
            <person name="Hallsworth K."/>
            <person name="Hawkins J."/>
            <person name="Hillier L.W."/>
            <person name="Jier M."/>
            <person name="Johnson D."/>
            <person name="Johnston L."/>
            <person name="Kirsten J."/>
            <person name="Kucaba T."/>
            <person name="Langston Y."/>
            <person name="Latreille P."/>
            <person name="Le T."/>
            <person name="Mardis E."/>
            <person name="Menezes S."/>
            <person name="Miller N."/>
            <person name="Nhan M."/>
            <person name="Pauley A."/>
            <person name="Peluso D."/>
            <person name="Rifkin L."/>
            <person name="Riles L."/>
            <person name="Taich A."/>
            <person name="Trevaskis E."/>
            <person name="Vignati D."/>
            <person name="Wilcox L."/>
            <person name="Wohldman P."/>
            <person name="Vaudin M."/>
            <person name="Wilson R."/>
            <person name="Waterston R."/>
            <person name="Albermann K."/>
            <person name="Hani J."/>
            <person name="Heumann K."/>
            <person name="Kleine K."/>
            <person name="Mewes H.-W."/>
            <person name="Zollner A."/>
            <person name="Zaccaria P."/>
        </authorList>
    </citation>
    <scope>NUCLEOTIDE SEQUENCE [LARGE SCALE GENOMIC DNA]</scope>
    <source>
        <strain>ATCC 204508 / S288c</strain>
    </source>
</reference>
<reference key="4">
    <citation type="journal article" date="2014" name="G3 (Bethesda)">
        <title>The reference genome sequence of Saccharomyces cerevisiae: Then and now.</title>
        <authorList>
            <person name="Engel S.R."/>
            <person name="Dietrich F.S."/>
            <person name="Fisk D.G."/>
            <person name="Binkley G."/>
            <person name="Balakrishnan R."/>
            <person name="Costanzo M.C."/>
            <person name="Dwight S.S."/>
            <person name="Hitz B.C."/>
            <person name="Karra K."/>
            <person name="Nash R.S."/>
            <person name="Weng S."/>
            <person name="Wong E.D."/>
            <person name="Lloyd P."/>
            <person name="Skrzypek M.S."/>
            <person name="Miyasato S.R."/>
            <person name="Simison M."/>
            <person name="Cherry J.M."/>
        </authorList>
    </citation>
    <scope>GENOME REANNOTATION</scope>
    <source>
        <strain>ATCC 204508 / S288c</strain>
    </source>
</reference>
<reference key="5">
    <citation type="journal article" date="2007" name="Genome Res.">
        <title>Approaching a complete repository of sequence-verified protein-encoding clones for Saccharomyces cerevisiae.</title>
        <authorList>
            <person name="Hu Y."/>
            <person name="Rolfs A."/>
            <person name="Bhullar B."/>
            <person name="Murthy T.V.S."/>
            <person name="Zhu C."/>
            <person name="Berger M.F."/>
            <person name="Camargo A.A."/>
            <person name="Kelley F."/>
            <person name="McCarron S."/>
            <person name="Jepson D."/>
            <person name="Richardson A."/>
            <person name="Raphael J."/>
            <person name="Moreira D."/>
            <person name="Taycher E."/>
            <person name="Zuo D."/>
            <person name="Mohr S."/>
            <person name="Kane M.F."/>
            <person name="Williamson J."/>
            <person name="Simpson A.J.G."/>
            <person name="Bulyk M.L."/>
            <person name="Harlow E."/>
            <person name="Marsischky G."/>
            <person name="Kolodner R.D."/>
            <person name="LaBaer J."/>
        </authorList>
    </citation>
    <scope>NUCLEOTIDE SEQUENCE [GENOMIC DNA]</scope>
    <source>
        <strain>ATCC 204508 / S288c</strain>
    </source>
</reference>
<reference key="6">
    <citation type="journal article" date="2003" name="Nature">
        <title>Global analysis of protein localization in budding yeast.</title>
        <authorList>
            <person name="Huh W.-K."/>
            <person name="Falvo J.V."/>
            <person name="Gerke L.C."/>
            <person name="Carroll A.S."/>
            <person name="Howson R.W."/>
            <person name="Weissman J.S."/>
            <person name="O'Shea E.K."/>
        </authorList>
    </citation>
    <scope>SUBCELLULAR LOCATION [LARGE SCALE ANALYSIS]</scope>
</reference>
<reference key="7">
    <citation type="journal article" date="2003" name="Nature">
        <title>Global analysis of protein expression in yeast.</title>
        <authorList>
            <person name="Ghaemmaghami S."/>
            <person name="Huh W.-K."/>
            <person name="Bower K."/>
            <person name="Howson R.W."/>
            <person name="Belle A."/>
            <person name="Dephoure N."/>
            <person name="O'Shea E.K."/>
            <person name="Weissman J.S."/>
        </authorList>
    </citation>
    <scope>LEVEL OF PROTEIN EXPRESSION [LARGE SCALE ANALYSIS]</scope>
</reference>
<reference key="8">
    <citation type="journal article" date="2009" name="Genetics">
        <title>Genetic identification of factors that modulate ribosomal DNA transcription in Saccharomyces cerevisiae.</title>
        <authorList>
            <person name="Hontz R.D."/>
            <person name="Niederer R.O."/>
            <person name="Johnson J.M."/>
            <person name="Smith J.S."/>
        </authorList>
    </citation>
    <scope>FUNCTION</scope>
</reference>
<accession>Q12084</accession>
<accession>D6VS06</accession>
<protein>
    <recommendedName>
        <fullName>Putative uridine kinase DAS2</fullName>
        <ecNumber>2.7.1.48</ecNumber>
    </recommendedName>
    <alternativeName>
        <fullName>DST1-delta 6-azauracil sensitivity protein 2</fullName>
    </alternativeName>
    <alternativeName>
        <fullName>Regulator of rDNA transcription 3</fullName>
    </alternativeName>
</protein>
<dbReference type="EC" id="2.7.1.48"/>
<dbReference type="EMBL" id="X95966">
    <property type="protein sequence ID" value="CAA65212.1"/>
    <property type="molecule type" value="Genomic_DNA"/>
</dbReference>
<dbReference type="EMBL" id="Z49770">
    <property type="protein sequence ID" value="CAA89845.1"/>
    <property type="molecule type" value="Genomic_DNA"/>
</dbReference>
<dbReference type="EMBL" id="Z74316">
    <property type="protein sequence ID" value="CAA98841.1"/>
    <property type="molecule type" value="Genomic_DNA"/>
</dbReference>
<dbReference type="EMBL" id="AY558571">
    <property type="protein sequence ID" value="AAS56897.1"/>
    <property type="molecule type" value="Genomic_DNA"/>
</dbReference>
<dbReference type="EMBL" id="BK006938">
    <property type="protein sequence ID" value="DAA11866.1"/>
    <property type="molecule type" value="Genomic_DNA"/>
</dbReference>
<dbReference type="PIR" id="S54643">
    <property type="entry name" value="S54643"/>
</dbReference>
<dbReference type="RefSeq" id="NP_010303.3">
    <property type="nucleotide sequence ID" value="NM_001180328.3"/>
</dbReference>
<dbReference type="SMR" id="Q12084"/>
<dbReference type="BioGRID" id="32070">
    <property type="interactions" value="84"/>
</dbReference>
<dbReference type="DIP" id="DIP-1721N"/>
<dbReference type="FunCoup" id="Q12084">
    <property type="interactions" value="293"/>
</dbReference>
<dbReference type="IntAct" id="Q12084">
    <property type="interactions" value="1"/>
</dbReference>
<dbReference type="MINT" id="Q12084"/>
<dbReference type="STRING" id="4932.YDR020C"/>
<dbReference type="iPTMnet" id="Q12084"/>
<dbReference type="PaxDb" id="4932-YDR020C"/>
<dbReference type="PeptideAtlas" id="Q12084"/>
<dbReference type="EnsemblFungi" id="YDR020C_mRNA">
    <property type="protein sequence ID" value="YDR020C"/>
    <property type="gene ID" value="YDR020C"/>
</dbReference>
<dbReference type="GeneID" id="851583"/>
<dbReference type="KEGG" id="sce:YDR020C"/>
<dbReference type="AGR" id="SGD:S000002427"/>
<dbReference type="SGD" id="S000002427">
    <property type="gene designation" value="DAS2"/>
</dbReference>
<dbReference type="VEuPathDB" id="FungiDB:YDR020C"/>
<dbReference type="eggNOG" id="KOG4203">
    <property type="taxonomic scope" value="Eukaryota"/>
</dbReference>
<dbReference type="GeneTree" id="ENSGT01020000230412"/>
<dbReference type="HOGENOM" id="CLU_021278_1_0_1"/>
<dbReference type="InParanoid" id="Q12084"/>
<dbReference type="OMA" id="EPICINI"/>
<dbReference type="OrthoDB" id="738517at2759"/>
<dbReference type="BioCyc" id="YEAST:G3O-29637-MONOMER"/>
<dbReference type="Reactome" id="R-SCE-73614">
    <property type="pathway name" value="Pyrimidine salvage"/>
</dbReference>
<dbReference type="UniPathway" id="UPA00574">
    <property type="reaction ID" value="UER00637"/>
</dbReference>
<dbReference type="UniPathway" id="UPA00579">
    <property type="reaction ID" value="UER00640"/>
</dbReference>
<dbReference type="BioGRID-ORCS" id="851583">
    <property type="hits" value="0 hits in 10 CRISPR screens"/>
</dbReference>
<dbReference type="PRO" id="PR:Q12084"/>
<dbReference type="Proteomes" id="UP000002311">
    <property type="component" value="Chromosome IV"/>
</dbReference>
<dbReference type="RNAct" id="Q12084">
    <property type="molecule type" value="protein"/>
</dbReference>
<dbReference type="GO" id="GO:0005737">
    <property type="term" value="C:cytoplasm"/>
    <property type="evidence" value="ECO:0007005"/>
    <property type="project" value="SGD"/>
</dbReference>
<dbReference type="GO" id="GO:0005634">
    <property type="term" value="C:nucleus"/>
    <property type="evidence" value="ECO:0007005"/>
    <property type="project" value="SGD"/>
</dbReference>
<dbReference type="GO" id="GO:0005524">
    <property type="term" value="F:ATP binding"/>
    <property type="evidence" value="ECO:0007669"/>
    <property type="project" value="UniProtKB-KW"/>
</dbReference>
<dbReference type="GO" id="GO:0043771">
    <property type="term" value="F:cytidine kinase activity"/>
    <property type="evidence" value="ECO:0007669"/>
    <property type="project" value="RHEA"/>
</dbReference>
<dbReference type="GO" id="GO:0004849">
    <property type="term" value="F:uridine kinase activity"/>
    <property type="evidence" value="ECO:0007669"/>
    <property type="project" value="UniProtKB-EC"/>
</dbReference>
<dbReference type="GO" id="GO:0044211">
    <property type="term" value="P:CTP salvage"/>
    <property type="evidence" value="ECO:0007669"/>
    <property type="project" value="UniProtKB-UniPathway"/>
</dbReference>
<dbReference type="GO" id="GO:0044206">
    <property type="term" value="P:UMP salvage"/>
    <property type="evidence" value="ECO:0007669"/>
    <property type="project" value="UniProtKB-UniPathway"/>
</dbReference>
<dbReference type="FunFam" id="3.40.50.300:FF:002516">
    <property type="entry name" value="YDR020C-like protein"/>
    <property type="match status" value="1"/>
</dbReference>
<dbReference type="Gene3D" id="3.40.50.300">
    <property type="entry name" value="P-loop containing nucleotide triphosphate hydrolases"/>
    <property type="match status" value="1"/>
</dbReference>
<dbReference type="InterPro" id="IPR027417">
    <property type="entry name" value="P-loop_NTPase"/>
</dbReference>
<dbReference type="InterPro" id="IPR006083">
    <property type="entry name" value="PRK/URK"/>
</dbReference>
<dbReference type="PANTHER" id="PTHR10285">
    <property type="entry name" value="URIDINE KINASE"/>
    <property type="match status" value="1"/>
</dbReference>
<dbReference type="Pfam" id="PF00485">
    <property type="entry name" value="PRK"/>
    <property type="match status" value="1"/>
</dbReference>
<dbReference type="SUPFAM" id="SSF52540">
    <property type="entry name" value="P-loop containing nucleoside triphosphate hydrolases"/>
    <property type="match status" value="1"/>
</dbReference>
<evidence type="ECO:0000255" key="1"/>
<evidence type="ECO:0000269" key="2">
    <source>
    </source>
</evidence>
<evidence type="ECO:0000269" key="3">
    <source>
    </source>
</evidence>
<evidence type="ECO:0000269" key="4">
    <source>
    </source>
</evidence>
<evidence type="ECO:0000305" key="5"/>
<feature type="chain" id="PRO_0000242489" description="Putative uridine kinase DAS2">
    <location>
        <begin position="1"/>
        <end position="232"/>
    </location>
</feature>
<feature type="binding site" evidence="1">
    <location>
        <begin position="17"/>
        <end position="24"/>
    </location>
    <ligand>
        <name>ATP</name>
        <dbReference type="ChEBI" id="CHEBI:30616"/>
    </ligand>
</feature>
<sequence>MDRKAVEEKRIVISIGGGHATGVGAIALDLQNTFKSLYNSINIRVINLDNMIEGNIKSYNNNDYDFDNILNLVYEKHAVTSQNDMIQHDYEDPIDLIIVCGCYALYDKRINEISQLKVFLDSDADKRLISLIKKKNVGSNEQLAQLITEYMDHLRPEMQQYIEPTRTFADLIIPSTNENLGRAVLVDGIVKAIEDTKSQIEGNNTNNKIRPRLWDFEAETMDLEKDRYYDLS</sequence>
<comment type="function">
    <text evidence="4">Putative uridine kinase identified in a screen for mutants with increased levels of rDNA transcription.</text>
</comment>
<comment type="catalytic activity">
    <reaction>
        <text>uridine + ATP = UMP + ADP + H(+)</text>
        <dbReference type="Rhea" id="RHEA:16825"/>
        <dbReference type="ChEBI" id="CHEBI:15378"/>
        <dbReference type="ChEBI" id="CHEBI:16704"/>
        <dbReference type="ChEBI" id="CHEBI:30616"/>
        <dbReference type="ChEBI" id="CHEBI:57865"/>
        <dbReference type="ChEBI" id="CHEBI:456216"/>
        <dbReference type="EC" id="2.7.1.48"/>
    </reaction>
</comment>
<comment type="catalytic activity">
    <reaction>
        <text>cytidine + ATP = CMP + ADP + H(+)</text>
        <dbReference type="Rhea" id="RHEA:24674"/>
        <dbReference type="ChEBI" id="CHEBI:15378"/>
        <dbReference type="ChEBI" id="CHEBI:17562"/>
        <dbReference type="ChEBI" id="CHEBI:30616"/>
        <dbReference type="ChEBI" id="CHEBI:60377"/>
        <dbReference type="ChEBI" id="CHEBI:456216"/>
        <dbReference type="EC" id="2.7.1.48"/>
    </reaction>
</comment>
<comment type="pathway">
    <text>Pyrimidine metabolism; CTP biosynthesis via salvage pathway; CTP from cytidine: step 1/3.</text>
</comment>
<comment type="pathway">
    <text>Pyrimidine metabolism; UMP biosynthesis via salvage pathway; UMP from uridine: step 1/1.</text>
</comment>
<comment type="interaction">
    <interactant intactId="EBI-35824">
        <id>Q12084</id>
    </interactant>
    <interactant intactId="EBI-20151">
        <id>P27515</id>
        <label>URK1</label>
    </interactant>
    <organismsDiffer>false</organismsDiffer>
    <experiments>5</experiments>
</comment>
<comment type="subcellular location">
    <subcellularLocation>
        <location evidence="2">Cytoplasm</location>
    </subcellularLocation>
    <subcellularLocation>
        <location evidence="2">Nucleus</location>
    </subcellularLocation>
</comment>
<comment type="miscellaneous">
    <text evidence="3">Present with 4280 molecules/cell in log phase SD medium.</text>
</comment>
<comment type="similarity">
    <text evidence="5">Belongs to the uridine kinase family.</text>
</comment>
<organism>
    <name type="scientific">Saccharomyces cerevisiae (strain ATCC 204508 / S288c)</name>
    <name type="common">Baker's yeast</name>
    <dbReference type="NCBI Taxonomy" id="559292"/>
    <lineage>
        <taxon>Eukaryota</taxon>
        <taxon>Fungi</taxon>
        <taxon>Dikarya</taxon>
        <taxon>Ascomycota</taxon>
        <taxon>Saccharomycotina</taxon>
        <taxon>Saccharomycetes</taxon>
        <taxon>Saccharomycetales</taxon>
        <taxon>Saccharomycetaceae</taxon>
        <taxon>Saccharomyces</taxon>
    </lineage>
</organism>
<keyword id="KW-0067">ATP-binding</keyword>
<keyword id="KW-0963">Cytoplasm</keyword>
<keyword id="KW-0418">Kinase</keyword>
<keyword id="KW-0547">Nucleotide-binding</keyword>
<keyword id="KW-0539">Nucleus</keyword>
<keyword id="KW-1185">Reference proteome</keyword>
<keyword id="KW-0808">Transferase</keyword>
<proteinExistence type="evidence at protein level"/>
<name>DAS2_YEAST</name>
<gene>
    <name type="primary">DAS2</name>
    <name type="synonym">RRT3</name>
    <name type="ordered locus">YDR020C</name>
    <name type="ORF">PZE232</name>
</gene>